<name>CFA52_BOVIN</name>
<comment type="function">
    <text evidence="3 5">Microtubule inner protein (MIP) part of the dynein-decorated doublet microtubules (DMTs) in cilia axoneme (PubMed:34715025). Important for proper ciliary and flagellar beating (PubMed:34715025). May act in cooperation with CFAP45 and axonemal dynein subunit DNAH11. May play a role in cell growth and/or survival (By similarity).</text>
</comment>
<comment type="subunit">
    <text evidence="1 2 3 6">Microtubule inner protein component of sperm flagellar doublet microtubules (PubMed:37327785). Interacts with BRCA2 (By similarity). Interacts with the CCT chaperonin complex (By similarity). Interacts with HSP70 (By similarity). Interacts with AK8 (By similarity). Interacts with CFAP45 (By similarity). Interacts with DNAI1 (By similarity). Interacts with IQDC (By similarity).</text>
</comment>
<comment type="subcellular location">
    <subcellularLocation>
        <location evidence="5">Cytoplasm</location>
        <location evidence="5">Cytoskeleton</location>
        <location evidence="5">Cilium axoneme</location>
    </subcellularLocation>
    <subcellularLocation>
        <location evidence="3">Cytoplasm</location>
    </subcellularLocation>
    <subcellularLocation>
        <location evidence="3">Cytoplasm</location>
        <location evidence="3">Cytoskeleton</location>
        <location evidence="3">Cilium axoneme</location>
    </subcellularLocation>
    <subcellularLocation>
        <location evidence="6">Cytoplasm</location>
        <location evidence="6">Cytoskeleton</location>
        <location evidence="6">Flagellum axoneme</location>
    </subcellularLocation>
    <text evidence="3">Located in the proximal region of respiratory cilia.</text>
</comment>
<comment type="tissue specificity">
    <text evidence="5">Expressed in trachea multiciliated cells.</text>
</comment>
<comment type="similarity">
    <text evidence="7">Belongs to the CFAP52 family.</text>
</comment>
<accession>E1BKF9</accession>
<keyword id="KW-0002">3D-structure</keyword>
<keyword id="KW-0966">Cell projection</keyword>
<keyword id="KW-0969">Cilium</keyword>
<keyword id="KW-0963">Cytoplasm</keyword>
<keyword id="KW-0206">Cytoskeleton</keyword>
<keyword id="KW-0282">Flagellum</keyword>
<keyword id="KW-1185">Reference proteome</keyword>
<keyword id="KW-0677">Repeat</keyword>
<keyword id="KW-0853">WD repeat</keyword>
<reference key="1">
    <citation type="journal article" date="2009" name="Genome Biol.">
        <title>A whole-genome assembly of the domestic cow, Bos taurus.</title>
        <authorList>
            <person name="Zimin A.V."/>
            <person name="Delcher A.L."/>
            <person name="Florea L."/>
            <person name="Kelley D.R."/>
            <person name="Schatz M.C."/>
            <person name="Puiu D."/>
            <person name="Hanrahan F."/>
            <person name="Pertea G."/>
            <person name="Van Tassell C.P."/>
            <person name="Sonstegard T.S."/>
            <person name="Marcais G."/>
            <person name="Roberts M."/>
            <person name="Subramanian P."/>
            <person name="Yorke J.A."/>
            <person name="Salzberg S.L."/>
        </authorList>
    </citation>
    <scope>NUCLEOTIDE SEQUENCE [LARGE SCALE GENOMIC DNA]</scope>
    <source>
        <strain>Hereford</strain>
    </source>
</reference>
<reference evidence="9" key="2">
    <citation type="journal article" date="2021" name="Cell">
        <title>De novo identification of mammalian ciliary motility proteins using cryo-EM.</title>
        <authorList>
            <person name="Gui M."/>
            <person name="Farley H."/>
            <person name="Anujan P."/>
            <person name="Anderson J.R."/>
            <person name="Maxwell D.W."/>
            <person name="Whitchurch J.B."/>
            <person name="Botsch J.J."/>
            <person name="Qiu T."/>
            <person name="Meleppattu S."/>
            <person name="Singh S.K."/>
            <person name="Zhang Q."/>
            <person name="Thompson J."/>
            <person name="Lucas J.S."/>
            <person name="Bingle C.D."/>
            <person name="Norris D.P."/>
            <person name="Roy S."/>
            <person name="Brown A."/>
        </authorList>
    </citation>
    <scope>STRUCTURE BY ELECTRON MICROSCOPY (3.40 ANGSTROMS)</scope>
    <scope>FUNCTION</scope>
    <scope>SUBCELLULAR LOCATION</scope>
    <scope>TISSUE SPECIFICITY</scope>
</reference>
<reference evidence="10" key="3">
    <citation type="journal article" date="2023" name="Cell">
        <title>Structural specializations of the sperm tail.</title>
        <authorList>
            <person name="Leung M.R."/>
            <person name="Zeng J."/>
            <person name="Wang X."/>
            <person name="Roelofs M.C."/>
            <person name="Huang W."/>
            <person name="Zenezini Chiozzi R."/>
            <person name="Hevler J.F."/>
            <person name="Heck A.J.R."/>
            <person name="Dutcher S.K."/>
            <person name="Brown A."/>
            <person name="Zhang R."/>
            <person name="Zeev-Ben-Mordehai T."/>
        </authorList>
    </citation>
    <scope>STRUCTURE BY ELECTRON MICROSCOPY (3.60 ANGSTROMS)</scope>
    <scope>SUBUNIT</scope>
    <scope>SUBCELLULAR LOCATION</scope>
</reference>
<gene>
    <name type="primary">CFAP52</name>
</gene>
<dbReference type="PDB" id="7RRO">
    <property type="method" value="EM"/>
    <property type="resolution" value="3.40 A"/>
    <property type="chains" value="e/f/g=1-623"/>
</dbReference>
<dbReference type="PDB" id="8OTZ">
    <property type="method" value="EM"/>
    <property type="resolution" value="3.60 A"/>
    <property type="chains" value="e/f/g=1-623"/>
</dbReference>
<dbReference type="PDB" id="9CPB">
    <property type="method" value="EM"/>
    <property type="resolution" value="3.52 A"/>
    <property type="chains" value="2O/2P/2Q=1-623"/>
</dbReference>
<dbReference type="PDBsum" id="7RRO"/>
<dbReference type="PDBsum" id="8OTZ"/>
<dbReference type="PDBsum" id="9CPB"/>
<dbReference type="EMDB" id="EMD-17187"/>
<dbReference type="EMDB" id="EMD-24664"/>
<dbReference type="EMDB" id="EMD-45801"/>
<dbReference type="EMDB" id="EMD-50664"/>
<dbReference type="SMR" id="E1BKF9"/>
<dbReference type="FunCoup" id="E1BKF9">
    <property type="interactions" value="169"/>
</dbReference>
<dbReference type="STRING" id="9913.ENSBTAP00000023697"/>
<dbReference type="PaxDb" id="9913-ENSBTAP00000023697"/>
<dbReference type="VEuPathDB" id="HostDB:ENSBTAG00000017823"/>
<dbReference type="eggNOG" id="KOG0266">
    <property type="taxonomic scope" value="Eukaryota"/>
</dbReference>
<dbReference type="HOGENOM" id="CLU_009244_2_0_1"/>
<dbReference type="InParanoid" id="E1BKF9"/>
<dbReference type="OMA" id="RIMVYNF"/>
<dbReference type="OrthoDB" id="6252103at2759"/>
<dbReference type="TreeFam" id="TF323254"/>
<dbReference type="Proteomes" id="UP000009136">
    <property type="component" value="Chromosome 19"/>
</dbReference>
<dbReference type="Bgee" id="ENSBTAG00000017823">
    <property type="expression patterns" value="Expressed in oviduct epithelium and 43 other cell types or tissues"/>
</dbReference>
<dbReference type="GO" id="GO:0160112">
    <property type="term" value="C:axonemal B tubule inner sheath"/>
    <property type="evidence" value="ECO:0000250"/>
    <property type="project" value="UniProtKB"/>
</dbReference>
<dbReference type="GO" id="GO:0005879">
    <property type="term" value="C:axonemal microtubule"/>
    <property type="evidence" value="ECO:0000314"/>
    <property type="project" value="UniProtKB"/>
</dbReference>
<dbReference type="GO" id="GO:0036126">
    <property type="term" value="C:sperm flagellum"/>
    <property type="evidence" value="ECO:0000250"/>
    <property type="project" value="UniProtKB"/>
</dbReference>
<dbReference type="GO" id="GO:0030317">
    <property type="term" value="P:flagellated sperm motility"/>
    <property type="evidence" value="ECO:0000250"/>
    <property type="project" value="UniProtKB"/>
</dbReference>
<dbReference type="FunFam" id="2.130.10.10:FF:000173">
    <property type="entry name" value="Cilia- and flagella-associated protein 52"/>
    <property type="match status" value="1"/>
</dbReference>
<dbReference type="FunFam" id="2.130.10.10:FF:000207">
    <property type="entry name" value="Cilia- and flagella-associated protein 52"/>
    <property type="match status" value="1"/>
</dbReference>
<dbReference type="FunFam" id="2.130.10.10:FF:000291">
    <property type="entry name" value="Cilia-and flagella-associated protein 52 isoform X1"/>
    <property type="match status" value="1"/>
</dbReference>
<dbReference type="Gene3D" id="2.130.10.10">
    <property type="entry name" value="YVTN repeat-like/Quinoprotein amine dehydrogenase"/>
    <property type="match status" value="3"/>
</dbReference>
<dbReference type="InterPro" id="IPR015943">
    <property type="entry name" value="WD40/YVTN_repeat-like_dom_sf"/>
</dbReference>
<dbReference type="InterPro" id="IPR019775">
    <property type="entry name" value="WD40_repeat_CS"/>
</dbReference>
<dbReference type="InterPro" id="IPR036322">
    <property type="entry name" value="WD40_repeat_dom_sf"/>
</dbReference>
<dbReference type="InterPro" id="IPR001680">
    <property type="entry name" value="WD40_rpt"/>
</dbReference>
<dbReference type="InterPro" id="IPR050630">
    <property type="entry name" value="WD_repeat_EMAP"/>
</dbReference>
<dbReference type="PANTHER" id="PTHR13720:SF14">
    <property type="entry name" value="CILIA- AND FLAGELLA-ASSOCIATED PROTEIN 52"/>
    <property type="match status" value="1"/>
</dbReference>
<dbReference type="PANTHER" id="PTHR13720">
    <property type="entry name" value="WD-40 REPEAT PROTEIN"/>
    <property type="match status" value="1"/>
</dbReference>
<dbReference type="Pfam" id="PF00400">
    <property type="entry name" value="WD40"/>
    <property type="match status" value="6"/>
</dbReference>
<dbReference type="SMART" id="SM00320">
    <property type="entry name" value="WD40"/>
    <property type="match status" value="12"/>
</dbReference>
<dbReference type="SUPFAM" id="SSF50978">
    <property type="entry name" value="WD40 repeat-like"/>
    <property type="match status" value="2"/>
</dbReference>
<dbReference type="PROSITE" id="PS00678">
    <property type="entry name" value="WD_REPEATS_1"/>
    <property type="match status" value="1"/>
</dbReference>
<dbReference type="PROSITE" id="PS50082">
    <property type="entry name" value="WD_REPEATS_2"/>
    <property type="match status" value="5"/>
</dbReference>
<dbReference type="PROSITE" id="PS50294">
    <property type="entry name" value="WD_REPEATS_REGION"/>
    <property type="match status" value="2"/>
</dbReference>
<evidence type="ECO:0000250" key="1">
    <source>
        <dbReference type="UniProtKB" id="F1SS88"/>
    </source>
</evidence>
<evidence type="ECO:0000250" key="2">
    <source>
        <dbReference type="UniProtKB" id="Q5F201"/>
    </source>
</evidence>
<evidence type="ECO:0000250" key="3">
    <source>
        <dbReference type="UniProtKB" id="Q8N1V2"/>
    </source>
</evidence>
<evidence type="ECO:0000255" key="4"/>
<evidence type="ECO:0000269" key="5">
    <source>
    </source>
</evidence>
<evidence type="ECO:0000269" key="6">
    <source>
    </source>
</evidence>
<evidence type="ECO:0000305" key="7"/>
<evidence type="ECO:0000312" key="8">
    <source>
        <dbReference type="Proteomes" id="UP000009136"/>
    </source>
</evidence>
<evidence type="ECO:0007744" key="9">
    <source>
        <dbReference type="PDB" id="7RRO"/>
    </source>
</evidence>
<evidence type="ECO:0007744" key="10">
    <source>
        <dbReference type="PDB" id="8OTZ"/>
    </source>
</evidence>
<organism evidence="8">
    <name type="scientific">Bos taurus</name>
    <name type="common">Bovine</name>
    <dbReference type="NCBI Taxonomy" id="9913"/>
    <lineage>
        <taxon>Eukaryota</taxon>
        <taxon>Metazoa</taxon>
        <taxon>Chordata</taxon>
        <taxon>Craniata</taxon>
        <taxon>Vertebrata</taxon>
        <taxon>Euteleostomi</taxon>
        <taxon>Mammalia</taxon>
        <taxon>Eutheria</taxon>
        <taxon>Laurasiatheria</taxon>
        <taxon>Artiodactyla</taxon>
        <taxon>Ruminantia</taxon>
        <taxon>Pecora</taxon>
        <taxon>Bovidae</taxon>
        <taxon>Bovinae</taxon>
        <taxon>Bos</taxon>
    </lineage>
</organism>
<sequence>METQASPKDEVAEAVELELEAVIGFNGHVPTGLKCHPDQEHLVYPLGCTILIQAINTQEQNFLHGHGNNVSCVAISKSGLYIASGQVTFMGFKADIILWDYKKRELMARLSLHKGKIEALAFSPNDMYLVSLGGPDDGSVVVWSIAKREAICGSPAAGLNVGNATTVIFSKCRDEMFVTAGNGTIRVWELDLPNRKIWPTECQTGQMKRIVMSISMANDDSFFYLGTTTGDILKMNPRTKLLADTGPAKDKFSLGVSAICCLKMGGLLVGSGDGLLVFCKSPSYKPIKKIQLQGGITSITLRGEGHQFFVGTEESHIYRVNFTNFKETLITTCHFESVEDIVFPFGTAELFATCAKKDIRVWHTLTNRELLRITVPNMTCHGIDFMRDGKSIISAWDDGRIRAFAPETGRLMYVINNAHRIGVTAIATTSDCKRVISGGGEGEVRVWHIGHQTQKLEEALKEHKSSVSCIRVKKSNEECVTASTDGTCIIWDLVRLRRNQMILANTLFQCVCYHPEEFQIITSGTDRKIAYWEVFDGSVIRELDGSLSGAVNGMDITVEGVHFVTGGNDHLVKVWDYNEGEVTHVGVGHSGNITRIRISPGNQYIVSVSADGAILRWKYPFPS</sequence>
<feature type="chain" id="PRO_0000456167" description="Cilia- and flagella-associated protein 52">
    <location>
        <begin position="1"/>
        <end position="623"/>
    </location>
</feature>
<feature type="repeat" description="WD 1" evidence="4">
    <location>
        <begin position="65"/>
        <end position="109"/>
    </location>
</feature>
<feature type="repeat" description="WD 2" evidence="4">
    <location>
        <begin position="112"/>
        <end position="153"/>
    </location>
</feature>
<feature type="repeat" description="WD 3" evidence="4">
    <location>
        <begin position="159"/>
        <end position="198"/>
    </location>
</feature>
<feature type="repeat" description="WD 4" evidence="4">
    <location>
        <begin position="291"/>
        <end position="330"/>
    </location>
</feature>
<feature type="repeat" description="WD 5" evidence="4">
    <location>
        <begin position="333"/>
        <end position="372"/>
    </location>
</feature>
<feature type="repeat" description="WD 6" evidence="4">
    <location>
        <begin position="375"/>
        <end position="414"/>
    </location>
</feature>
<feature type="repeat" description="WD 7" evidence="4">
    <location>
        <begin position="418"/>
        <end position="457"/>
    </location>
</feature>
<feature type="repeat" description="WD 8" evidence="4">
    <location>
        <begin position="462"/>
        <end position="501"/>
    </location>
</feature>
<feature type="repeat" description="WD 9" evidence="4">
    <location>
        <begin position="503"/>
        <end position="544"/>
    </location>
</feature>
<feature type="repeat" description="WD 10" evidence="4">
    <location>
        <begin position="546"/>
        <end position="585"/>
    </location>
</feature>
<feature type="repeat" description="WD 11" evidence="4">
    <location>
        <begin position="588"/>
        <end position="623"/>
    </location>
</feature>
<proteinExistence type="evidence at protein level"/>
<protein>
    <recommendedName>
        <fullName>Cilia- and flagella-associated protein 52</fullName>
    </recommendedName>
</protein>